<keyword id="KW-0046">Antibiotic resistance</keyword>
<keyword id="KW-1185">Reference proteome</keyword>
<proteinExistence type="predicted"/>
<accession>P31121</accession>
<reference key="1">
    <citation type="journal article" date="1993" name="J. Bacteriol.">
        <title>Genetic and functional analysis of the multiple antibiotic resistance (mar) locus in Escherichia coli.</title>
        <authorList>
            <person name="Cohen S.P."/>
            <person name="Haechler H."/>
            <person name="Levy S.B."/>
        </authorList>
    </citation>
    <scope>NUCLEOTIDE SEQUENCE [GENOMIC DNA]</scope>
</reference>
<reference key="2">
    <citation type="journal article" date="1993" name="J. Bacteriol.">
        <title>Overexpression of the MarA positive regulator is sufficient to confer multiple antibiotic resistance in Escherichia coli.</title>
        <authorList>
            <person name="Gambino L."/>
            <person name="Gracheck S."/>
            <person name="Miller P.F."/>
        </authorList>
    </citation>
    <scope>NUCLEOTIDE SEQUENCE [GENOMIC DNA]</scope>
    <source>
        <strain>K12</strain>
    </source>
</reference>
<reference key="3">
    <citation type="journal article" date="1996" name="DNA Res.">
        <title>A 570-kb DNA sequence of the Escherichia coli K-12 genome corresponding to the 28.0-40.1 min region on the linkage map.</title>
        <authorList>
            <person name="Aiba H."/>
            <person name="Baba T."/>
            <person name="Fujita K."/>
            <person name="Hayashi K."/>
            <person name="Inada T."/>
            <person name="Isono K."/>
            <person name="Itoh T."/>
            <person name="Kasai H."/>
            <person name="Kashimoto K."/>
            <person name="Kimura S."/>
            <person name="Kitakawa M."/>
            <person name="Kitagawa M."/>
            <person name="Makino K."/>
            <person name="Miki T."/>
            <person name="Mizobuchi K."/>
            <person name="Mori H."/>
            <person name="Mori T."/>
            <person name="Motomura K."/>
            <person name="Nakade S."/>
            <person name="Nakamura Y."/>
            <person name="Nashimoto H."/>
            <person name="Nishio Y."/>
            <person name="Oshima T."/>
            <person name="Saito N."/>
            <person name="Sampei G."/>
            <person name="Seki Y."/>
            <person name="Sivasundaram S."/>
            <person name="Tagami H."/>
            <person name="Takeda J."/>
            <person name="Takemoto K."/>
            <person name="Takeuchi Y."/>
            <person name="Wada C."/>
            <person name="Yamamoto Y."/>
            <person name="Horiuchi T."/>
        </authorList>
    </citation>
    <scope>NUCLEOTIDE SEQUENCE [LARGE SCALE GENOMIC DNA]</scope>
    <source>
        <strain>K12 / W3110 / ATCC 27325 / DSM 5911</strain>
    </source>
</reference>
<reference key="4">
    <citation type="journal article" date="1997" name="Science">
        <title>The complete genome sequence of Escherichia coli K-12.</title>
        <authorList>
            <person name="Blattner F.R."/>
            <person name="Plunkett G. III"/>
            <person name="Bloch C.A."/>
            <person name="Perna N.T."/>
            <person name="Burland V."/>
            <person name="Riley M."/>
            <person name="Collado-Vides J."/>
            <person name="Glasner J.D."/>
            <person name="Rode C.K."/>
            <person name="Mayhew G.F."/>
            <person name="Gregor J."/>
            <person name="Davis N.W."/>
            <person name="Kirkpatrick H.A."/>
            <person name="Goeden M.A."/>
            <person name="Rose D.J."/>
            <person name="Mau B."/>
            <person name="Shao Y."/>
        </authorList>
    </citation>
    <scope>NUCLEOTIDE SEQUENCE [LARGE SCALE GENOMIC DNA]</scope>
    <source>
        <strain>K12 / MG1655 / ATCC 47076</strain>
    </source>
</reference>
<reference key="5">
    <citation type="journal article" date="2006" name="Mol. Syst. Biol.">
        <title>Highly accurate genome sequences of Escherichia coli K-12 strains MG1655 and W3110.</title>
        <authorList>
            <person name="Hayashi K."/>
            <person name="Morooka N."/>
            <person name="Yamamoto Y."/>
            <person name="Fujita K."/>
            <person name="Isono K."/>
            <person name="Choi S."/>
            <person name="Ohtsubo E."/>
            <person name="Baba T."/>
            <person name="Wanner B.L."/>
            <person name="Mori H."/>
            <person name="Horiuchi T."/>
        </authorList>
    </citation>
    <scope>NUCLEOTIDE SEQUENCE [LARGE SCALE GENOMIC DNA]</scope>
    <source>
        <strain>K12 / W3110 / ATCC 27325 / DSM 5911</strain>
    </source>
</reference>
<feature type="chain" id="PRO_0000096241" description="Multiple antibiotic resistance protein MarB">
    <location>
        <begin position="1"/>
        <end position="72"/>
    </location>
</feature>
<sequence>MKPLSSAIAAALILFSAQGVAEQTTQPVVTSCANVVVVPPSQEHPPFDLNHMGTGSDKSDALGVPYYNQHAM</sequence>
<name>MARB_ECOLI</name>
<gene>
    <name type="primary">marB</name>
    <name type="ordered locus">b1532</name>
    <name type="ordered locus">JW1525</name>
</gene>
<protein>
    <recommendedName>
        <fullName>Multiple antibiotic resistance protein MarB</fullName>
    </recommendedName>
</protein>
<dbReference type="EMBL" id="M96235">
    <property type="status" value="NOT_ANNOTATED_CDS"/>
    <property type="molecule type" value="Genomic_DNA"/>
</dbReference>
<dbReference type="EMBL" id="L06966">
    <property type="status" value="NOT_ANNOTATED_CDS"/>
    <property type="molecule type" value="Genomic_DNA"/>
</dbReference>
<dbReference type="EMBL" id="U00096">
    <property type="protein sequence ID" value="AAC74605.1"/>
    <property type="molecule type" value="Genomic_DNA"/>
</dbReference>
<dbReference type="EMBL" id="AP009048">
    <property type="protein sequence ID" value="BAA15222.1"/>
    <property type="molecule type" value="Genomic_DNA"/>
</dbReference>
<dbReference type="PIR" id="C47072">
    <property type="entry name" value="C47072"/>
</dbReference>
<dbReference type="RefSeq" id="NP_416049.1">
    <property type="nucleotide sequence ID" value="NC_000913.3"/>
</dbReference>
<dbReference type="RefSeq" id="WP_000803657.1">
    <property type="nucleotide sequence ID" value="NZ_SSZK01000001.1"/>
</dbReference>
<dbReference type="BioGRID" id="4259111">
    <property type="interactions" value="169"/>
</dbReference>
<dbReference type="FunCoup" id="P31121">
    <property type="interactions" value="15"/>
</dbReference>
<dbReference type="STRING" id="511145.b1532"/>
<dbReference type="PaxDb" id="511145-b1532"/>
<dbReference type="EnsemblBacteria" id="AAC74605">
    <property type="protein sequence ID" value="AAC74605"/>
    <property type="gene ID" value="b1532"/>
</dbReference>
<dbReference type="GeneID" id="946184"/>
<dbReference type="KEGG" id="ecj:JW1525"/>
<dbReference type="KEGG" id="eco:b1532"/>
<dbReference type="KEGG" id="ecoc:C3026_08850"/>
<dbReference type="PATRIC" id="fig|511145.12.peg.1601"/>
<dbReference type="EchoBASE" id="EB1556"/>
<dbReference type="eggNOG" id="ENOG50330WV">
    <property type="taxonomic scope" value="Bacteria"/>
</dbReference>
<dbReference type="HOGENOM" id="CLU_194634_0_0_6"/>
<dbReference type="InParanoid" id="P31121"/>
<dbReference type="OMA" id="HMGAGSD"/>
<dbReference type="OrthoDB" id="6566500at2"/>
<dbReference type="PhylomeDB" id="P31121"/>
<dbReference type="BioCyc" id="EcoCyc:EG11599-MONOMER"/>
<dbReference type="PRO" id="PR:P31121"/>
<dbReference type="Proteomes" id="UP000000625">
    <property type="component" value="Chromosome"/>
</dbReference>
<dbReference type="GO" id="GO:0030288">
    <property type="term" value="C:outer membrane-bounded periplasmic space"/>
    <property type="evidence" value="ECO:0000314"/>
    <property type="project" value="EcoCyc"/>
</dbReference>
<dbReference type="GO" id="GO:0046677">
    <property type="term" value="P:response to antibiotic"/>
    <property type="evidence" value="ECO:0007669"/>
    <property type="project" value="UniProtKB-KW"/>
</dbReference>
<dbReference type="InterPro" id="IPR025732">
    <property type="entry name" value="MarB"/>
</dbReference>
<dbReference type="NCBIfam" id="NF007508">
    <property type="entry name" value="PRK10106.1"/>
    <property type="match status" value="1"/>
</dbReference>
<dbReference type="Pfam" id="PF13999">
    <property type="entry name" value="MarB"/>
    <property type="match status" value="1"/>
</dbReference>
<organism>
    <name type="scientific">Escherichia coli (strain K12)</name>
    <dbReference type="NCBI Taxonomy" id="83333"/>
    <lineage>
        <taxon>Bacteria</taxon>
        <taxon>Pseudomonadati</taxon>
        <taxon>Pseudomonadota</taxon>
        <taxon>Gammaproteobacteria</taxon>
        <taxon>Enterobacterales</taxon>
        <taxon>Enterobacteriaceae</taxon>
        <taxon>Escherichia</taxon>
    </lineage>
</organism>